<keyword id="KW-0963">Cytoplasm</keyword>
<keyword id="KW-0342">GTP-binding</keyword>
<keyword id="KW-0396">Initiation factor</keyword>
<keyword id="KW-0547">Nucleotide-binding</keyword>
<keyword id="KW-0648">Protein biosynthesis</keyword>
<keyword id="KW-1185">Reference proteome</keyword>
<dbReference type="EMBL" id="CP000885">
    <property type="protein sequence ID" value="ABX43134.1"/>
    <property type="molecule type" value="Genomic_DNA"/>
</dbReference>
<dbReference type="RefSeq" id="WP_012200785.1">
    <property type="nucleotide sequence ID" value="NC_010001.1"/>
</dbReference>
<dbReference type="SMR" id="A9KNW4"/>
<dbReference type="STRING" id="357809.Cphy_2774"/>
<dbReference type="KEGG" id="cpy:Cphy_2774"/>
<dbReference type="eggNOG" id="COG0532">
    <property type="taxonomic scope" value="Bacteria"/>
</dbReference>
<dbReference type="HOGENOM" id="CLU_006301_5_1_9"/>
<dbReference type="OrthoDB" id="9811804at2"/>
<dbReference type="Proteomes" id="UP000000370">
    <property type="component" value="Chromosome"/>
</dbReference>
<dbReference type="GO" id="GO:0005829">
    <property type="term" value="C:cytosol"/>
    <property type="evidence" value="ECO:0007669"/>
    <property type="project" value="TreeGrafter"/>
</dbReference>
<dbReference type="GO" id="GO:0005525">
    <property type="term" value="F:GTP binding"/>
    <property type="evidence" value="ECO:0007669"/>
    <property type="project" value="UniProtKB-KW"/>
</dbReference>
<dbReference type="GO" id="GO:0003924">
    <property type="term" value="F:GTPase activity"/>
    <property type="evidence" value="ECO:0007669"/>
    <property type="project" value="UniProtKB-UniRule"/>
</dbReference>
<dbReference type="GO" id="GO:0003743">
    <property type="term" value="F:translation initiation factor activity"/>
    <property type="evidence" value="ECO:0007669"/>
    <property type="project" value="UniProtKB-UniRule"/>
</dbReference>
<dbReference type="CDD" id="cd01887">
    <property type="entry name" value="IF2_eIF5B"/>
    <property type="match status" value="1"/>
</dbReference>
<dbReference type="CDD" id="cd03702">
    <property type="entry name" value="IF2_mtIF2_II"/>
    <property type="match status" value="1"/>
</dbReference>
<dbReference type="CDD" id="cd03692">
    <property type="entry name" value="mtIF2_IVc"/>
    <property type="match status" value="1"/>
</dbReference>
<dbReference type="FunFam" id="2.40.30.10:FF:000007">
    <property type="entry name" value="Translation initiation factor IF-2"/>
    <property type="match status" value="1"/>
</dbReference>
<dbReference type="FunFam" id="2.40.30.10:FF:000008">
    <property type="entry name" value="Translation initiation factor IF-2"/>
    <property type="match status" value="1"/>
</dbReference>
<dbReference type="FunFam" id="3.40.50.10050:FF:000001">
    <property type="entry name" value="Translation initiation factor IF-2"/>
    <property type="match status" value="1"/>
</dbReference>
<dbReference type="FunFam" id="3.40.50.300:FF:000019">
    <property type="entry name" value="Translation initiation factor IF-2"/>
    <property type="match status" value="1"/>
</dbReference>
<dbReference type="Gene3D" id="1.10.10.2480">
    <property type="match status" value="1"/>
</dbReference>
<dbReference type="Gene3D" id="3.40.50.300">
    <property type="entry name" value="P-loop containing nucleotide triphosphate hydrolases"/>
    <property type="match status" value="1"/>
</dbReference>
<dbReference type="Gene3D" id="2.40.30.10">
    <property type="entry name" value="Translation factors"/>
    <property type="match status" value="2"/>
</dbReference>
<dbReference type="Gene3D" id="3.40.50.10050">
    <property type="entry name" value="Translation initiation factor IF- 2, domain 3"/>
    <property type="match status" value="1"/>
</dbReference>
<dbReference type="HAMAP" id="MF_00100_B">
    <property type="entry name" value="IF_2_B"/>
    <property type="match status" value="1"/>
</dbReference>
<dbReference type="InterPro" id="IPR053905">
    <property type="entry name" value="EF-G-like_DII"/>
</dbReference>
<dbReference type="InterPro" id="IPR044145">
    <property type="entry name" value="IF2_II"/>
</dbReference>
<dbReference type="InterPro" id="IPR006847">
    <property type="entry name" value="IF2_N"/>
</dbReference>
<dbReference type="InterPro" id="IPR027417">
    <property type="entry name" value="P-loop_NTPase"/>
</dbReference>
<dbReference type="InterPro" id="IPR005225">
    <property type="entry name" value="Small_GTP-bd"/>
</dbReference>
<dbReference type="InterPro" id="IPR000795">
    <property type="entry name" value="T_Tr_GTP-bd_dom"/>
</dbReference>
<dbReference type="InterPro" id="IPR000178">
    <property type="entry name" value="TF_IF2_bacterial-like"/>
</dbReference>
<dbReference type="InterPro" id="IPR015760">
    <property type="entry name" value="TIF_IF2"/>
</dbReference>
<dbReference type="InterPro" id="IPR023115">
    <property type="entry name" value="TIF_IF2_dom3"/>
</dbReference>
<dbReference type="InterPro" id="IPR036925">
    <property type="entry name" value="TIF_IF2_dom3_sf"/>
</dbReference>
<dbReference type="InterPro" id="IPR009000">
    <property type="entry name" value="Transl_B-barrel_sf"/>
</dbReference>
<dbReference type="NCBIfam" id="TIGR00487">
    <property type="entry name" value="IF-2"/>
    <property type="match status" value="1"/>
</dbReference>
<dbReference type="NCBIfam" id="TIGR00231">
    <property type="entry name" value="small_GTP"/>
    <property type="match status" value="1"/>
</dbReference>
<dbReference type="PANTHER" id="PTHR43381:SF5">
    <property type="entry name" value="TR-TYPE G DOMAIN-CONTAINING PROTEIN"/>
    <property type="match status" value="1"/>
</dbReference>
<dbReference type="PANTHER" id="PTHR43381">
    <property type="entry name" value="TRANSLATION INITIATION FACTOR IF-2-RELATED"/>
    <property type="match status" value="1"/>
</dbReference>
<dbReference type="Pfam" id="PF22042">
    <property type="entry name" value="EF-G_D2"/>
    <property type="match status" value="1"/>
</dbReference>
<dbReference type="Pfam" id="PF00009">
    <property type="entry name" value="GTP_EFTU"/>
    <property type="match status" value="1"/>
</dbReference>
<dbReference type="Pfam" id="PF11987">
    <property type="entry name" value="IF-2"/>
    <property type="match status" value="1"/>
</dbReference>
<dbReference type="Pfam" id="PF04760">
    <property type="entry name" value="IF2_N"/>
    <property type="match status" value="2"/>
</dbReference>
<dbReference type="SUPFAM" id="SSF52156">
    <property type="entry name" value="Initiation factor IF2/eIF5b, domain 3"/>
    <property type="match status" value="1"/>
</dbReference>
<dbReference type="SUPFAM" id="SSF52540">
    <property type="entry name" value="P-loop containing nucleoside triphosphate hydrolases"/>
    <property type="match status" value="1"/>
</dbReference>
<dbReference type="SUPFAM" id="SSF50447">
    <property type="entry name" value="Translation proteins"/>
    <property type="match status" value="2"/>
</dbReference>
<dbReference type="PROSITE" id="PS51722">
    <property type="entry name" value="G_TR_2"/>
    <property type="match status" value="1"/>
</dbReference>
<dbReference type="PROSITE" id="PS01176">
    <property type="entry name" value="IF2"/>
    <property type="match status" value="1"/>
</dbReference>
<proteinExistence type="inferred from homology"/>
<name>IF2_LACP7</name>
<reference key="1">
    <citation type="submission" date="2007-11" db="EMBL/GenBank/DDBJ databases">
        <title>Complete genome sequence of Clostridium phytofermentans ISDg.</title>
        <authorList>
            <person name="Leschine S.B."/>
            <person name="Warnick T.A."/>
            <person name="Blanchard J.L."/>
            <person name="Schnell D.J."/>
            <person name="Petit E.L."/>
            <person name="LaTouf W.G."/>
            <person name="Copeland A."/>
            <person name="Lucas S."/>
            <person name="Lapidus A."/>
            <person name="Barry K."/>
            <person name="Glavina del Rio T."/>
            <person name="Dalin E."/>
            <person name="Tice H."/>
            <person name="Pitluck S."/>
            <person name="Kiss H."/>
            <person name="Brettin T."/>
            <person name="Bruce D."/>
            <person name="Detter J.C."/>
            <person name="Han C."/>
            <person name="Kuske C."/>
            <person name="Schmutz J."/>
            <person name="Larimer F."/>
            <person name="Land M."/>
            <person name="Hauser L."/>
            <person name="Kyrpides N."/>
            <person name="Kim E.A."/>
            <person name="Richardson P."/>
        </authorList>
    </citation>
    <scope>NUCLEOTIDE SEQUENCE [LARGE SCALE GENOMIC DNA]</scope>
    <source>
        <strain>ATCC 700394 / DSM 18823 / ISDg</strain>
    </source>
</reference>
<gene>
    <name evidence="2" type="primary">infB</name>
    <name type="ordered locus">Cphy_2774</name>
</gene>
<organism>
    <name type="scientific">Lachnoclostridium phytofermentans (strain ATCC 700394 / DSM 18823 / ISDg)</name>
    <name type="common">Clostridium phytofermentans</name>
    <dbReference type="NCBI Taxonomy" id="357809"/>
    <lineage>
        <taxon>Bacteria</taxon>
        <taxon>Bacillati</taxon>
        <taxon>Bacillota</taxon>
        <taxon>Clostridia</taxon>
        <taxon>Lachnospirales</taxon>
        <taxon>Lachnospiraceae</taxon>
    </lineage>
</organism>
<comment type="function">
    <text evidence="2">One of the essential components for the initiation of protein synthesis. Protects formylmethionyl-tRNA from spontaneous hydrolysis and promotes its binding to the 30S ribosomal subunits. Also involved in the hydrolysis of GTP during the formation of the 70S ribosomal complex.</text>
</comment>
<comment type="subcellular location">
    <subcellularLocation>
        <location evidence="2">Cytoplasm</location>
    </subcellularLocation>
</comment>
<comment type="similarity">
    <text evidence="2">Belongs to the TRAFAC class translation factor GTPase superfamily. Classic translation factor GTPase family. IF-2 subfamily.</text>
</comment>
<feature type="chain" id="PRO_1000075600" description="Translation initiation factor IF-2">
    <location>
        <begin position="1"/>
        <end position="1131"/>
    </location>
</feature>
<feature type="domain" description="tr-type G">
    <location>
        <begin position="632"/>
        <end position="801"/>
    </location>
</feature>
<feature type="region of interest" description="Disordered" evidence="3">
    <location>
        <begin position="49"/>
        <end position="542"/>
    </location>
</feature>
<feature type="region of interest" description="G1" evidence="1">
    <location>
        <begin position="641"/>
        <end position="648"/>
    </location>
</feature>
<feature type="region of interest" description="G2" evidence="1">
    <location>
        <begin position="666"/>
        <end position="670"/>
    </location>
</feature>
<feature type="region of interest" description="G3" evidence="1">
    <location>
        <begin position="687"/>
        <end position="690"/>
    </location>
</feature>
<feature type="region of interest" description="G4" evidence="1">
    <location>
        <begin position="741"/>
        <end position="744"/>
    </location>
</feature>
<feature type="region of interest" description="G5" evidence="1">
    <location>
        <begin position="777"/>
        <end position="779"/>
    </location>
</feature>
<feature type="compositionally biased region" description="Basic and acidic residues" evidence="3">
    <location>
        <begin position="60"/>
        <end position="75"/>
    </location>
</feature>
<feature type="compositionally biased region" description="Polar residues" evidence="3">
    <location>
        <begin position="76"/>
        <end position="88"/>
    </location>
</feature>
<feature type="compositionally biased region" description="Polar residues" evidence="3">
    <location>
        <begin position="108"/>
        <end position="125"/>
    </location>
</feature>
<feature type="compositionally biased region" description="Basic and acidic residues" evidence="3">
    <location>
        <begin position="127"/>
        <end position="138"/>
    </location>
</feature>
<feature type="compositionally biased region" description="Polar residues" evidence="3">
    <location>
        <begin position="139"/>
        <end position="152"/>
    </location>
</feature>
<feature type="compositionally biased region" description="Basic and acidic residues" evidence="3">
    <location>
        <begin position="164"/>
        <end position="180"/>
    </location>
</feature>
<feature type="compositionally biased region" description="Basic and acidic residues" evidence="3">
    <location>
        <begin position="223"/>
        <end position="239"/>
    </location>
</feature>
<feature type="compositionally biased region" description="Gly residues" evidence="3">
    <location>
        <begin position="411"/>
        <end position="436"/>
    </location>
</feature>
<feature type="compositionally biased region" description="Basic and acidic residues" evidence="3">
    <location>
        <begin position="450"/>
        <end position="479"/>
    </location>
</feature>
<feature type="compositionally biased region" description="Basic and acidic residues" evidence="3">
    <location>
        <begin position="487"/>
        <end position="530"/>
    </location>
</feature>
<feature type="binding site" evidence="2">
    <location>
        <begin position="641"/>
        <end position="648"/>
    </location>
    <ligand>
        <name>GTP</name>
        <dbReference type="ChEBI" id="CHEBI:37565"/>
    </ligand>
</feature>
<feature type="binding site" evidence="2">
    <location>
        <begin position="687"/>
        <end position="691"/>
    </location>
    <ligand>
        <name>GTP</name>
        <dbReference type="ChEBI" id="CHEBI:37565"/>
    </ligand>
</feature>
<feature type="binding site" evidence="2">
    <location>
        <begin position="741"/>
        <end position="744"/>
    </location>
    <ligand>
        <name>GTP</name>
        <dbReference type="ChEBI" id="CHEBI:37565"/>
    </ligand>
</feature>
<accession>A9KNW4</accession>
<evidence type="ECO:0000250" key="1"/>
<evidence type="ECO:0000255" key="2">
    <source>
        <dbReference type="HAMAP-Rule" id="MF_00100"/>
    </source>
</evidence>
<evidence type="ECO:0000256" key="3">
    <source>
        <dbReference type="SAM" id="MobiDB-lite"/>
    </source>
</evidence>
<sequence length="1131" mass="123782">MAKMKIHELAKELGVDNNVIVNFLQSKGSEVKSYRNNIEEKEIDLVRGKFKGSVSSNEPKSIDNGKASRVEKPEKNNSVTAKADQTPSEPVVHKQRPMTAQGERKNMSEQNVTTGSTESEDNIQSVGDRKYQHTDRRPQGNNGEGPQTSTNSGDRRPQGQGSYGDRRPQGQNSGDRRPYNGDRPQGQNSGDRRPYNGDRPQGQNSGDRRPYNGDRPQGQGNYGDRRPQGQNSGDRRPYNGDRPQGQGNYGDRRPQGQGSYGDRRPNSGDRPQGQGNYGDRRPQGQGSYGDRRPQGQGSYGDRPQGQGSYGDRPQGQGSYGDRRPQGQGSYGDRRPQGQGSYGDRPQGQGSYGDRRPQGQGSYGDRPQGQGNYGDRRPGGQGSYGDRRPQGQGSYGDRPQGQGNFGDRRPQGQGGYGGRPQGQGSYGGRPQGQGGYAGRSQGQGSFGGFNKDFDKDKDSGYTRSFDKKRTDPKSGEKSSIKSDLANELTKEQRAAAFNDKSRDRDRNRDRGRNNVEDGNIKSAKGKKDPNRKGAFIMPKPQQSLEKQDEIKTVIIPEVLTIKELADKMKVVPSVVVKKLFLAGKMVSINSEITFEEAEEIALGYEIIAEKEVLVNKVEELLKEDDEDENLMVKRPPVVCVMGHVDHGKTSLLDAIREANVTSREAGGITQHIGAYTVEVNGEKITFLDTPGHEAFTSMRMRGAKSTDIAILVVAADDGVMPQTVEAISHAKAAGVQIIVAINKIDKPSANIERVKQELTEHELIAEDWGGDTIFVPVSAHTKEGIDQLLEMIILTAEMGELKANPDRMARGIVIEAELDKGRGTVATILVQKGTLHVGDNIVIGSTYGKVRAMMDDKGRRVKEATPSTPVEILGLNAVPNAGEIFMATENEKEARNIADAFISQGKERLLADTKAKLSLDGLFSQIQAGNIKELNLIVKADVQGSVEAVKQSLVKLSNEEVAVRIIHGGVGAINESDVMLASTSNAIIIGFNVRPDNMAREIAEREKVDLRLYRVIYSAIEDVEAAMKGMLDPTFEEKVMGHAEVRQVFKASGLGTIAGSYVLDGKIVRGCSARITREGTQIFEGALASLKRFKDDVKEVNTGYECGLVFEKFNDIQEYDLVELYMMVEVPR</sequence>
<protein>
    <recommendedName>
        <fullName evidence="2">Translation initiation factor IF-2</fullName>
    </recommendedName>
</protein>